<keyword id="KW-0963">Cytoplasm</keyword>
<keyword id="KW-0378">Hydrolase</keyword>
<keyword id="KW-0694">RNA-binding</keyword>
<keyword id="KW-0820">tRNA-binding</keyword>
<comment type="function">
    <text evidence="1">An aminoacyl-tRNA editing enzyme that deacylates mischarged D-aminoacyl-tRNAs. Also deacylates mischarged glycyl-tRNA(Ala), protecting cells against glycine mischarging by AlaRS. Acts via tRNA-based rather than protein-based catalysis; rejects L-amino acids rather than detecting D-amino acids in the active site. By recycling D-aminoacyl-tRNA to D-amino acids and free tRNA molecules, this enzyme counteracts the toxicity associated with the formation of D-aminoacyl-tRNA entities in vivo and helps enforce protein L-homochirality.</text>
</comment>
<comment type="catalytic activity">
    <reaction evidence="1">
        <text>glycyl-tRNA(Ala) + H2O = tRNA(Ala) + glycine + H(+)</text>
        <dbReference type="Rhea" id="RHEA:53744"/>
        <dbReference type="Rhea" id="RHEA-COMP:9657"/>
        <dbReference type="Rhea" id="RHEA-COMP:13640"/>
        <dbReference type="ChEBI" id="CHEBI:15377"/>
        <dbReference type="ChEBI" id="CHEBI:15378"/>
        <dbReference type="ChEBI" id="CHEBI:57305"/>
        <dbReference type="ChEBI" id="CHEBI:78442"/>
        <dbReference type="ChEBI" id="CHEBI:78522"/>
        <dbReference type="EC" id="3.1.1.96"/>
    </reaction>
</comment>
<comment type="catalytic activity">
    <reaction evidence="1">
        <text>a D-aminoacyl-tRNA + H2O = a tRNA + a D-alpha-amino acid + H(+)</text>
        <dbReference type="Rhea" id="RHEA:13953"/>
        <dbReference type="Rhea" id="RHEA-COMP:10123"/>
        <dbReference type="Rhea" id="RHEA-COMP:10124"/>
        <dbReference type="ChEBI" id="CHEBI:15377"/>
        <dbReference type="ChEBI" id="CHEBI:15378"/>
        <dbReference type="ChEBI" id="CHEBI:59871"/>
        <dbReference type="ChEBI" id="CHEBI:78442"/>
        <dbReference type="ChEBI" id="CHEBI:79333"/>
        <dbReference type="EC" id="3.1.1.96"/>
    </reaction>
</comment>
<comment type="subunit">
    <text evidence="1">Homodimer.</text>
</comment>
<comment type="subcellular location">
    <subcellularLocation>
        <location evidence="1">Cytoplasm</location>
    </subcellularLocation>
</comment>
<comment type="domain">
    <text evidence="1">A Gly-cisPro motif from one monomer fits into the active site of the other monomer to allow specific chiral rejection of L-amino acids.</text>
</comment>
<comment type="similarity">
    <text evidence="1">Belongs to the DTD family.</text>
</comment>
<evidence type="ECO:0000255" key="1">
    <source>
        <dbReference type="HAMAP-Rule" id="MF_00518"/>
    </source>
</evidence>
<organism>
    <name type="scientific">Caldicellulosiruptor saccharolyticus (strain ATCC 43494 / DSM 8903 / Tp8T 6331)</name>
    <dbReference type="NCBI Taxonomy" id="351627"/>
    <lineage>
        <taxon>Bacteria</taxon>
        <taxon>Bacillati</taxon>
        <taxon>Bacillota</taxon>
        <taxon>Bacillota incertae sedis</taxon>
        <taxon>Caldicellulosiruptorales</taxon>
        <taxon>Caldicellulosiruptoraceae</taxon>
        <taxon>Caldicellulosiruptor</taxon>
    </lineage>
</organism>
<dbReference type="EC" id="3.1.1.96" evidence="1"/>
<dbReference type="EMBL" id="CP000679">
    <property type="protein sequence ID" value="ABP66616.1"/>
    <property type="molecule type" value="Genomic_DNA"/>
</dbReference>
<dbReference type="RefSeq" id="WP_011916562.1">
    <property type="nucleotide sequence ID" value="NC_009437.1"/>
</dbReference>
<dbReference type="SMR" id="A4XI81"/>
<dbReference type="STRING" id="351627.Csac_1002"/>
<dbReference type="KEGG" id="csc:Csac_1002"/>
<dbReference type="eggNOG" id="COG1490">
    <property type="taxonomic scope" value="Bacteria"/>
</dbReference>
<dbReference type="HOGENOM" id="CLU_076901_1_0_9"/>
<dbReference type="OrthoDB" id="9801395at2"/>
<dbReference type="Proteomes" id="UP000000256">
    <property type="component" value="Chromosome"/>
</dbReference>
<dbReference type="GO" id="GO:0005737">
    <property type="term" value="C:cytoplasm"/>
    <property type="evidence" value="ECO:0007669"/>
    <property type="project" value="UniProtKB-SubCell"/>
</dbReference>
<dbReference type="GO" id="GO:0051500">
    <property type="term" value="F:D-tyrosyl-tRNA(Tyr) deacylase activity"/>
    <property type="evidence" value="ECO:0007669"/>
    <property type="project" value="TreeGrafter"/>
</dbReference>
<dbReference type="GO" id="GO:0106026">
    <property type="term" value="F:Gly-tRNA(Ala) deacylase activity"/>
    <property type="evidence" value="ECO:0007669"/>
    <property type="project" value="UniProtKB-UniRule"/>
</dbReference>
<dbReference type="GO" id="GO:0043908">
    <property type="term" value="F:Ser(Gly)-tRNA(Ala) hydrolase activity"/>
    <property type="evidence" value="ECO:0007669"/>
    <property type="project" value="UniProtKB-UniRule"/>
</dbReference>
<dbReference type="GO" id="GO:0000049">
    <property type="term" value="F:tRNA binding"/>
    <property type="evidence" value="ECO:0007669"/>
    <property type="project" value="UniProtKB-UniRule"/>
</dbReference>
<dbReference type="GO" id="GO:0019478">
    <property type="term" value="P:D-amino acid catabolic process"/>
    <property type="evidence" value="ECO:0007669"/>
    <property type="project" value="UniProtKB-UniRule"/>
</dbReference>
<dbReference type="CDD" id="cd00563">
    <property type="entry name" value="Dtyr_deacylase"/>
    <property type="match status" value="1"/>
</dbReference>
<dbReference type="FunFam" id="3.50.80.10:FF:000001">
    <property type="entry name" value="D-aminoacyl-tRNA deacylase"/>
    <property type="match status" value="1"/>
</dbReference>
<dbReference type="Gene3D" id="3.50.80.10">
    <property type="entry name" value="D-tyrosyl-tRNA(Tyr) deacylase"/>
    <property type="match status" value="1"/>
</dbReference>
<dbReference type="HAMAP" id="MF_00518">
    <property type="entry name" value="Deacylase_Dtd"/>
    <property type="match status" value="1"/>
</dbReference>
<dbReference type="InterPro" id="IPR003732">
    <property type="entry name" value="Daa-tRNA_deacyls_DTD"/>
</dbReference>
<dbReference type="InterPro" id="IPR023509">
    <property type="entry name" value="DTD-like_sf"/>
</dbReference>
<dbReference type="NCBIfam" id="TIGR00256">
    <property type="entry name" value="D-aminoacyl-tRNA deacylase"/>
    <property type="match status" value="1"/>
</dbReference>
<dbReference type="PANTHER" id="PTHR10472:SF5">
    <property type="entry name" value="D-AMINOACYL-TRNA DEACYLASE 1"/>
    <property type="match status" value="1"/>
</dbReference>
<dbReference type="PANTHER" id="PTHR10472">
    <property type="entry name" value="D-TYROSYL-TRNA TYR DEACYLASE"/>
    <property type="match status" value="1"/>
</dbReference>
<dbReference type="Pfam" id="PF02580">
    <property type="entry name" value="Tyr_Deacylase"/>
    <property type="match status" value="1"/>
</dbReference>
<dbReference type="SUPFAM" id="SSF69500">
    <property type="entry name" value="DTD-like"/>
    <property type="match status" value="1"/>
</dbReference>
<protein>
    <recommendedName>
        <fullName evidence="1">D-aminoacyl-tRNA deacylase</fullName>
        <shortName evidence="1">DTD</shortName>
        <ecNumber evidence="1">3.1.1.96</ecNumber>
    </recommendedName>
    <alternativeName>
        <fullName evidence="1">Gly-tRNA(Ala) deacylase</fullName>
    </alternativeName>
</protein>
<reference key="1">
    <citation type="submission" date="2007-04" db="EMBL/GenBank/DDBJ databases">
        <title>Genome sequence of the thermophilic hydrogen-producing bacterium Caldicellulosiruptor saccharolyticus DSM 8903.</title>
        <authorList>
            <person name="Copeland A."/>
            <person name="Lucas S."/>
            <person name="Lapidus A."/>
            <person name="Barry K."/>
            <person name="Detter J.C."/>
            <person name="Glavina del Rio T."/>
            <person name="Hammon N."/>
            <person name="Israni S."/>
            <person name="Dalin E."/>
            <person name="Tice H."/>
            <person name="Pitluck S."/>
            <person name="Kiss H."/>
            <person name="Brettin T."/>
            <person name="Bruce D."/>
            <person name="Han C."/>
            <person name="Schmutz J."/>
            <person name="Larimer F."/>
            <person name="Land M."/>
            <person name="Hauser L."/>
            <person name="Kyrpides N."/>
            <person name="Lykidis A."/>
            <person name="van de Werken H.J.G."/>
            <person name="Verhaart M.R.A."/>
            <person name="VanFossen A.L."/>
            <person name="Lewis D.L."/>
            <person name="Nichols J.D."/>
            <person name="Goorissen H.P."/>
            <person name="van Niel E.W.J."/>
            <person name="Stams F.J.M."/>
            <person name="Willquist K.U."/>
            <person name="Ward D.E."/>
            <person name="van der Oost J."/>
            <person name="Kelly R.M."/>
            <person name="Kengen S.M.W."/>
            <person name="Richardson P."/>
        </authorList>
    </citation>
    <scope>NUCLEOTIDE SEQUENCE [LARGE SCALE GENOMIC DNA]</scope>
    <source>
        <strain>ATCC 43494 / DSM 8903 / Tp8T 6331</strain>
    </source>
</reference>
<gene>
    <name evidence="1" type="primary">dtd</name>
    <name type="ordered locus">Csac_1002</name>
</gene>
<accession>A4XI81</accession>
<feature type="chain" id="PRO_1000050821" description="D-aminoacyl-tRNA deacylase">
    <location>
        <begin position="1"/>
        <end position="149"/>
    </location>
</feature>
<feature type="short sequence motif" description="Gly-cisPro motif, important for rejection of L-amino acids" evidence="1">
    <location>
        <begin position="137"/>
        <end position="138"/>
    </location>
</feature>
<name>DTD_CALS8</name>
<proteinExistence type="inferred from homology"/>
<sequence>MRAVVQRVKRASVAVDGNAVGEIDKGLCILLGVANDDTEEDANYLCEKIVNLRIFEDETSKFNLSLKDIDGEVLVVSNFTVMGDARKGRRPNFMFAADKEKAERLYNYFVERLKGLAKKVECGIFQAHMEVEIVNDGPVTILLDSKKVF</sequence>